<protein>
    <recommendedName>
        <fullName evidence="7">Divergent protein kinase domain 1B</fullName>
    </recommendedName>
    <alternativeName>
        <fullName>Protein FAM69B</fullName>
    </alternativeName>
</protein>
<accession>Q5VUD6</accession>
<accession>Q5VUD7</accession>
<accession>Q8N5N0</accession>
<accession>Q8WYU5</accession>
<name>DIK1B_HUMAN</name>
<feature type="chain" id="PRO_0000287231" description="Divergent protein kinase domain 1B">
    <location>
        <begin position="1"/>
        <end position="431"/>
    </location>
</feature>
<feature type="topological domain" description="Cytoplasmic" evidence="2">
    <location>
        <begin position="1"/>
        <end position="30"/>
    </location>
</feature>
<feature type="transmembrane region" description="Helical" evidence="2">
    <location>
        <begin position="31"/>
        <end position="51"/>
    </location>
</feature>
<feature type="topological domain" description="Lumenal" evidence="2">
    <location>
        <begin position="52"/>
        <end position="431"/>
    </location>
</feature>
<feature type="short sequence motif" description="May mediate ER retention" evidence="1">
    <location>
        <begin position="5"/>
        <end position="6"/>
    </location>
</feature>
<feature type="disulfide bond" evidence="7">
    <location>
        <begin position="57"/>
        <end position="94"/>
    </location>
</feature>
<feature type="disulfide bond" evidence="7">
    <location>
        <begin position="62"/>
        <end position="117"/>
    </location>
</feature>
<feature type="splice variant" id="VSP_025405" description="In isoform 2." evidence="6">
    <location>
        <begin position="1"/>
        <end position="87"/>
    </location>
</feature>
<feature type="sequence variant" id="VAR_032295" description="In dbSNP:rs945384." evidence="3 4 5">
    <original>S</original>
    <variation>G</variation>
    <location>
        <position position="158"/>
    </location>
</feature>
<feature type="sequence conflict" description="In Ref. 1; AAL55862." evidence="7" ref="1">
    <original>G</original>
    <variation>C</variation>
    <location>
        <position position="380"/>
    </location>
</feature>
<comment type="interaction">
    <interactant intactId="EBI-721274">
        <id>Q5VUD6</id>
    </interactant>
    <interactant intactId="EBI-711613">
        <id>P21673</id>
        <label>SAT1</label>
    </interactant>
    <organismsDiffer>false</organismsDiffer>
    <experiments>6</experiments>
</comment>
<comment type="subcellular location">
    <subcellularLocation>
        <location evidence="1">Endoplasmic reticulum membrane</location>
        <topology evidence="1">Single-pass type II membrane protein</topology>
    </subcellularLocation>
</comment>
<comment type="alternative products">
    <event type="alternative splicing"/>
    <isoform>
        <id>Q5VUD6-1</id>
        <name>1</name>
        <sequence type="displayed"/>
    </isoform>
    <isoform>
        <id>Q5VUD6-2</id>
        <name>2</name>
        <sequence type="described" ref="VSP_025405"/>
    </isoform>
</comment>
<comment type="PTM">
    <text evidence="1">Among the many cysteines in the lumenal domain, most are probably involved in disulfide bonds.</text>
</comment>
<comment type="similarity">
    <text evidence="7">Belongs to the DIPK family.</text>
</comment>
<comment type="sequence caution" evidence="7">
    <conflict type="frameshift">
        <sequence resource="EMBL-CDS" id="AAL55862"/>
    </conflict>
</comment>
<organism>
    <name type="scientific">Homo sapiens</name>
    <name type="common">Human</name>
    <dbReference type="NCBI Taxonomy" id="9606"/>
    <lineage>
        <taxon>Eukaryota</taxon>
        <taxon>Metazoa</taxon>
        <taxon>Chordata</taxon>
        <taxon>Craniata</taxon>
        <taxon>Vertebrata</taxon>
        <taxon>Euteleostomi</taxon>
        <taxon>Mammalia</taxon>
        <taxon>Eutheria</taxon>
        <taxon>Euarchontoglires</taxon>
        <taxon>Primates</taxon>
        <taxon>Haplorrhini</taxon>
        <taxon>Catarrhini</taxon>
        <taxon>Hominidae</taxon>
        <taxon>Homo</taxon>
    </lineage>
</organism>
<sequence>MRRLRRLAHLVLFCPFSKRLQGRLPGLRVRCIFLAWLGVFAGSWLVYVHYSSYSERCRGHVCQVVICDQYRKGIISGSVCQDLCELHMVEWRTCLSVAPGQQVYSGLWRDKDVTIKCGIEETLDSKARSDAAPRRELVLFDKPTRGTSIKEFREMTLSFLKANLGDLPSLPALVGQVLLMADFNKDNRVSLAEAKSVWALLQRNEFLLLLSLQEKEHASRLLGYCGDLYLTEGVPHGAWHAAALPPLLRPLLPPALQGALQQWLGPAWPWRAKIAIGLLEFVEELFHGSYGTFYMCETTLANVGYTATYDFKMADLQQVAPEATVRRFLQGRRCEHSTDCTYGRDCRAPCDRLMRQCKGDLIQPNLAKVCALLRGYLLPGAPADLREELGTQLRTCTTLSGLASQVEAHHSLVLSHLKTLLWKKISNTKYS</sequence>
<reference key="1">
    <citation type="journal article" date="2004" name="Proc. Natl. Acad. Sci. U.S.A.">
        <title>Large-scale cDNA transfection screening for genes related to cancer development and progression.</title>
        <authorList>
            <person name="Wan D."/>
            <person name="Gong Y."/>
            <person name="Qin W."/>
            <person name="Zhang P."/>
            <person name="Li J."/>
            <person name="Wei L."/>
            <person name="Zhou X."/>
            <person name="Li H."/>
            <person name="Qiu X."/>
            <person name="Zhong F."/>
            <person name="He L."/>
            <person name="Yu J."/>
            <person name="Yao G."/>
            <person name="Jiang H."/>
            <person name="Qian L."/>
            <person name="Yu Y."/>
            <person name="Shu H."/>
            <person name="Chen X."/>
            <person name="Xu H."/>
            <person name="Guo M."/>
            <person name="Pan Z."/>
            <person name="Chen Y."/>
            <person name="Ge C."/>
            <person name="Yang S."/>
            <person name="Gu J."/>
        </authorList>
    </citation>
    <scope>NUCLEOTIDE SEQUENCE [LARGE SCALE MRNA] (ISOFORM 2)</scope>
    <scope>VARIANT GLY-158</scope>
</reference>
<reference key="2">
    <citation type="journal article" date="2004" name="Nature">
        <title>DNA sequence and analysis of human chromosome 9.</title>
        <authorList>
            <person name="Humphray S.J."/>
            <person name="Oliver K."/>
            <person name="Hunt A.R."/>
            <person name="Plumb R.W."/>
            <person name="Loveland J.E."/>
            <person name="Howe K.L."/>
            <person name="Andrews T.D."/>
            <person name="Searle S."/>
            <person name="Hunt S.E."/>
            <person name="Scott C.E."/>
            <person name="Jones M.C."/>
            <person name="Ainscough R."/>
            <person name="Almeida J.P."/>
            <person name="Ambrose K.D."/>
            <person name="Ashwell R.I.S."/>
            <person name="Babbage A.K."/>
            <person name="Babbage S."/>
            <person name="Bagguley C.L."/>
            <person name="Bailey J."/>
            <person name="Banerjee R."/>
            <person name="Barker D.J."/>
            <person name="Barlow K.F."/>
            <person name="Bates K."/>
            <person name="Beasley H."/>
            <person name="Beasley O."/>
            <person name="Bird C.P."/>
            <person name="Bray-Allen S."/>
            <person name="Brown A.J."/>
            <person name="Brown J.Y."/>
            <person name="Burford D."/>
            <person name="Burrill W."/>
            <person name="Burton J."/>
            <person name="Carder C."/>
            <person name="Carter N.P."/>
            <person name="Chapman J.C."/>
            <person name="Chen Y."/>
            <person name="Clarke G."/>
            <person name="Clark S.Y."/>
            <person name="Clee C.M."/>
            <person name="Clegg S."/>
            <person name="Collier R.E."/>
            <person name="Corby N."/>
            <person name="Crosier M."/>
            <person name="Cummings A.T."/>
            <person name="Davies J."/>
            <person name="Dhami P."/>
            <person name="Dunn M."/>
            <person name="Dutta I."/>
            <person name="Dyer L.W."/>
            <person name="Earthrowl M.E."/>
            <person name="Faulkner L."/>
            <person name="Fleming C.J."/>
            <person name="Frankish A."/>
            <person name="Frankland J.A."/>
            <person name="French L."/>
            <person name="Fricker D.G."/>
            <person name="Garner P."/>
            <person name="Garnett J."/>
            <person name="Ghori J."/>
            <person name="Gilbert J.G.R."/>
            <person name="Glison C."/>
            <person name="Grafham D.V."/>
            <person name="Gribble S."/>
            <person name="Griffiths C."/>
            <person name="Griffiths-Jones S."/>
            <person name="Grocock R."/>
            <person name="Guy J."/>
            <person name="Hall R.E."/>
            <person name="Hammond S."/>
            <person name="Harley J.L."/>
            <person name="Harrison E.S.I."/>
            <person name="Hart E.A."/>
            <person name="Heath P.D."/>
            <person name="Henderson C.D."/>
            <person name="Hopkins B.L."/>
            <person name="Howard P.J."/>
            <person name="Howden P.J."/>
            <person name="Huckle E."/>
            <person name="Johnson C."/>
            <person name="Johnson D."/>
            <person name="Joy A.A."/>
            <person name="Kay M."/>
            <person name="Keenan S."/>
            <person name="Kershaw J.K."/>
            <person name="Kimberley A.M."/>
            <person name="King A."/>
            <person name="Knights A."/>
            <person name="Laird G.K."/>
            <person name="Langford C."/>
            <person name="Lawlor S."/>
            <person name="Leongamornlert D.A."/>
            <person name="Leversha M."/>
            <person name="Lloyd C."/>
            <person name="Lloyd D.M."/>
            <person name="Lovell J."/>
            <person name="Martin S."/>
            <person name="Mashreghi-Mohammadi M."/>
            <person name="Matthews L."/>
            <person name="McLaren S."/>
            <person name="McLay K.E."/>
            <person name="McMurray A."/>
            <person name="Milne S."/>
            <person name="Nickerson T."/>
            <person name="Nisbett J."/>
            <person name="Nordsiek G."/>
            <person name="Pearce A.V."/>
            <person name="Peck A.I."/>
            <person name="Porter K.M."/>
            <person name="Pandian R."/>
            <person name="Pelan S."/>
            <person name="Phillimore B."/>
            <person name="Povey S."/>
            <person name="Ramsey Y."/>
            <person name="Rand V."/>
            <person name="Scharfe M."/>
            <person name="Sehra H.K."/>
            <person name="Shownkeen R."/>
            <person name="Sims S.K."/>
            <person name="Skuce C.D."/>
            <person name="Smith M."/>
            <person name="Steward C.A."/>
            <person name="Swarbreck D."/>
            <person name="Sycamore N."/>
            <person name="Tester J."/>
            <person name="Thorpe A."/>
            <person name="Tracey A."/>
            <person name="Tromans A."/>
            <person name="Thomas D.W."/>
            <person name="Wall M."/>
            <person name="Wallis J.M."/>
            <person name="West A.P."/>
            <person name="Whitehead S.L."/>
            <person name="Willey D.L."/>
            <person name="Williams S.A."/>
            <person name="Wilming L."/>
            <person name="Wray P.W."/>
            <person name="Young L."/>
            <person name="Ashurst J.L."/>
            <person name="Coulson A."/>
            <person name="Blocker H."/>
            <person name="Durbin R.M."/>
            <person name="Sulston J.E."/>
            <person name="Hubbard T."/>
            <person name="Jackson M.J."/>
            <person name="Bentley D.R."/>
            <person name="Beck S."/>
            <person name="Rogers J."/>
            <person name="Dunham I."/>
        </authorList>
    </citation>
    <scope>NUCLEOTIDE SEQUENCE [LARGE SCALE GENOMIC DNA]</scope>
    <scope>VARIANT GLY-158</scope>
</reference>
<reference key="3">
    <citation type="submission" date="2005-07" db="EMBL/GenBank/DDBJ databases">
        <authorList>
            <person name="Mural R.J."/>
            <person name="Istrail S."/>
            <person name="Sutton G."/>
            <person name="Florea L."/>
            <person name="Halpern A.L."/>
            <person name="Mobarry C.M."/>
            <person name="Lippert R."/>
            <person name="Walenz B."/>
            <person name="Shatkay H."/>
            <person name="Dew I."/>
            <person name="Miller J.R."/>
            <person name="Flanigan M.J."/>
            <person name="Edwards N.J."/>
            <person name="Bolanos R."/>
            <person name="Fasulo D."/>
            <person name="Halldorsson B.V."/>
            <person name="Hannenhalli S."/>
            <person name="Turner R."/>
            <person name="Yooseph S."/>
            <person name="Lu F."/>
            <person name="Nusskern D.R."/>
            <person name="Shue B.C."/>
            <person name="Zheng X.H."/>
            <person name="Zhong F."/>
            <person name="Delcher A.L."/>
            <person name="Huson D.H."/>
            <person name="Kravitz S.A."/>
            <person name="Mouchard L."/>
            <person name="Reinert K."/>
            <person name="Remington K.A."/>
            <person name="Clark A.G."/>
            <person name="Waterman M.S."/>
            <person name="Eichler E.E."/>
            <person name="Adams M.D."/>
            <person name="Hunkapiller M.W."/>
            <person name="Myers E.W."/>
            <person name="Venter J.C."/>
        </authorList>
    </citation>
    <scope>NUCLEOTIDE SEQUENCE [LARGE SCALE GENOMIC DNA]</scope>
</reference>
<reference key="4">
    <citation type="journal article" date="2004" name="Genome Res.">
        <title>The status, quality, and expansion of the NIH full-length cDNA project: the Mammalian Gene Collection (MGC).</title>
        <authorList>
            <consortium name="The MGC Project Team"/>
        </authorList>
    </citation>
    <scope>NUCLEOTIDE SEQUENCE [LARGE SCALE MRNA] (ISOFORM 1)</scope>
    <scope>VARIANT GLY-158</scope>
    <source>
        <tissue>Brain</tissue>
    </source>
</reference>
<gene>
    <name evidence="8" type="primary">DIPK1B</name>
    <name type="synonym">C9orf136</name>
    <name type="synonym">FAM69B</name>
    <name type="ORF">PP6977</name>
</gene>
<evidence type="ECO:0000250" key="1"/>
<evidence type="ECO:0000255" key="2"/>
<evidence type="ECO:0000269" key="3">
    <source>
    </source>
</evidence>
<evidence type="ECO:0000269" key="4">
    <source>
    </source>
</evidence>
<evidence type="ECO:0000269" key="5">
    <source>
    </source>
</evidence>
<evidence type="ECO:0000303" key="6">
    <source>
    </source>
</evidence>
<evidence type="ECO:0000305" key="7"/>
<evidence type="ECO:0000312" key="8">
    <source>
        <dbReference type="HGNC" id="HGNC:28290"/>
    </source>
</evidence>
<proteinExistence type="evidence at protein level"/>
<keyword id="KW-0025">Alternative splicing</keyword>
<keyword id="KW-1015">Disulfide bond</keyword>
<keyword id="KW-0256">Endoplasmic reticulum</keyword>
<keyword id="KW-0472">Membrane</keyword>
<keyword id="KW-1267">Proteomics identification</keyword>
<keyword id="KW-1185">Reference proteome</keyword>
<keyword id="KW-0735">Signal-anchor</keyword>
<keyword id="KW-0812">Transmembrane</keyword>
<keyword id="KW-1133">Transmembrane helix</keyword>
<dbReference type="EMBL" id="AF318355">
    <property type="protein sequence ID" value="AAL55862.1"/>
    <property type="status" value="ALT_FRAME"/>
    <property type="molecule type" value="mRNA"/>
</dbReference>
<dbReference type="EMBL" id="AL590226">
    <property type="status" value="NOT_ANNOTATED_CDS"/>
    <property type="molecule type" value="Genomic_DNA"/>
</dbReference>
<dbReference type="EMBL" id="AL355987">
    <property type="status" value="NOT_ANNOTATED_CDS"/>
    <property type="molecule type" value="Genomic_DNA"/>
</dbReference>
<dbReference type="EMBL" id="CH471090">
    <property type="protein sequence ID" value="EAW88253.1"/>
    <property type="molecule type" value="Genomic_DNA"/>
</dbReference>
<dbReference type="EMBL" id="BC032097">
    <property type="protein sequence ID" value="AAH32097.1"/>
    <property type="molecule type" value="mRNA"/>
</dbReference>
<dbReference type="CCDS" id="CCDS7004.1">
    <molecule id="Q5VUD6-1"/>
</dbReference>
<dbReference type="RefSeq" id="NP_689634.2">
    <molecule id="Q5VUD6-1"/>
    <property type="nucleotide sequence ID" value="NM_152421.4"/>
</dbReference>
<dbReference type="RefSeq" id="XP_016869762.1">
    <property type="nucleotide sequence ID" value="XM_017014273.1"/>
</dbReference>
<dbReference type="SMR" id="Q5VUD6"/>
<dbReference type="BioGRID" id="126510">
    <property type="interactions" value="14"/>
</dbReference>
<dbReference type="FunCoup" id="Q5VUD6">
    <property type="interactions" value="79"/>
</dbReference>
<dbReference type="IntAct" id="Q5VUD6">
    <property type="interactions" value="11"/>
</dbReference>
<dbReference type="STRING" id="9606.ENSP00000360757"/>
<dbReference type="GlyGen" id="Q5VUD6">
    <property type="glycosylation" value="2 sites, 1 O-linked glycan (2 sites)"/>
</dbReference>
<dbReference type="iPTMnet" id="Q5VUD6"/>
<dbReference type="PhosphoSitePlus" id="Q5VUD6"/>
<dbReference type="SwissPalm" id="Q5VUD6"/>
<dbReference type="BioMuta" id="FAM69B"/>
<dbReference type="DMDM" id="296439350"/>
<dbReference type="jPOST" id="Q5VUD6"/>
<dbReference type="MassIVE" id="Q5VUD6"/>
<dbReference type="PaxDb" id="9606-ENSP00000360757"/>
<dbReference type="PeptideAtlas" id="Q5VUD6"/>
<dbReference type="ProteomicsDB" id="65414">
    <molecule id="Q5VUD6-1"/>
</dbReference>
<dbReference type="ProteomicsDB" id="65415">
    <molecule id="Q5VUD6-2"/>
</dbReference>
<dbReference type="Pumba" id="Q5VUD6"/>
<dbReference type="Antibodypedia" id="53284">
    <property type="antibodies" value="48 antibodies from 14 providers"/>
</dbReference>
<dbReference type="DNASU" id="138311"/>
<dbReference type="Ensembl" id="ENST00000371691.5">
    <molecule id="Q5VUD6-2"/>
    <property type="protein sequence ID" value="ENSP00000360756.1"/>
    <property type="gene ID" value="ENSG00000165716.11"/>
</dbReference>
<dbReference type="Ensembl" id="ENST00000371692.9">
    <molecule id="Q5VUD6-1"/>
    <property type="protein sequence ID" value="ENSP00000360757.4"/>
    <property type="gene ID" value="ENSG00000165716.11"/>
</dbReference>
<dbReference type="GeneID" id="138311"/>
<dbReference type="KEGG" id="hsa:138311"/>
<dbReference type="MANE-Select" id="ENST00000371692.9">
    <property type="protein sequence ID" value="ENSP00000360757.4"/>
    <property type="RefSeq nucleotide sequence ID" value="NM_152421.4"/>
    <property type="RefSeq protein sequence ID" value="NP_689634.2"/>
</dbReference>
<dbReference type="UCSC" id="uc004cik.4">
    <molecule id="Q5VUD6-1"/>
    <property type="organism name" value="human"/>
</dbReference>
<dbReference type="AGR" id="HGNC:28290"/>
<dbReference type="CTD" id="138311"/>
<dbReference type="DisGeNET" id="138311"/>
<dbReference type="GeneCards" id="DIPK1B"/>
<dbReference type="HGNC" id="HGNC:28290">
    <property type="gene designation" value="DIPK1B"/>
</dbReference>
<dbReference type="HPA" id="ENSG00000165716">
    <property type="expression patterns" value="Low tissue specificity"/>
</dbReference>
<dbReference type="MIM" id="614543">
    <property type="type" value="gene"/>
</dbReference>
<dbReference type="neXtProt" id="NX_Q5VUD6"/>
<dbReference type="OpenTargets" id="ENSG00000165716"/>
<dbReference type="PharmGKB" id="PA142671884"/>
<dbReference type="VEuPathDB" id="HostDB:ENSG00000165716"/>
<dbReference type="eggNOG" id="ENOG502QU5P">
    <property type="taxonomic scope" value="Eukaryota"/>
</dbReference>
<dbReference type="GeneTree" id="ENSGT00390000006452"/>
<dbReference type="HOGENOM" id="CLU_039177_0_0_1"/>
<dbReference type="InParanoid" id="Q5VUD6"/>
<dbReference type="OMA" id="WALLHIN"/>
<dbReference type="OrthoDB" id="8860232at2759"/>
<dbReference type="PAN-GO" id="Q5VUD6">
    <property type="GO annotations" value="0 GO annotations based on evolutionary models"/>
</dbReference>
<dbReference type="PhylomeDB" id="Q5VUD6"/>
<dbReference type="TreeFam" id="TF313319"/>
<dbReference type="PathwayCommons" id="Q5VUD6"/>
<dbReference type="SignaLink" id="Q5VUD6"/>
<dbReference type="BioGRID-ORCS" id="138311">
    <property type="hits" value="32 hits in 1153 CRISPR screens"/>
</dbReference>
<dbReference type="ChiTaRS" id="FAM69B">
    <property type="organism name" value="human"/>
</dbReference>
<dbReference type="GenomeRNAi" id="138311"/>
<dbReference type="Pharos" id="Q5VUD6">
    <property type="development level" value="Tdark"/>
</dbReference>
<dbReference type="PRO" id="PR:Q5VUD6"/>
<dbReference type="Proteomes" id="UP000005640">
    <property type="component" value="Chromosome 9"/>
</dbReference>
<dbReference type="RNAct" id="Q5VUD6">
    <property type="molecule type" value="protein"/>
</dbReference>
<dbReference type="Bgee" id="ENSG00000165716">
    <property type="expression patterns" value="Expressed in lateral nuclear group of thalamus and 159 other cell types or tissues"/>
</dbReference>
<dbReference type="ExpressionAtlas" id="Q5VUD6">
    <property type="expression patterns" value="baseline and differential"/>
</dbReference>
<dbReference type="GO" id="GO:0005789">
    <property type="term" value="C:endoplasmic reticulum membrane"/>
    <property type="evidence" value="ECO:0007669"/>
    <property type="project" value="UniProtKB-SubCell"/>
</dbReference>
<dbReference type="InterPro" id="IPR022049">
    <property type="entry name" value="FAM69_kinase_dom"/>
</dbReference>
<dbReference type="InterPro" id="IPR029244">
    <property type="entry name" value="FAM69_N"/>
</dbReference>
<dbReference type="PANTHER" id="PTHR21093:SF3">
    <property type="entry name" value="DIVERGENT PROTEIN KINASE DOMAIN 1B"/>
    <property type="match status" value="1"/>
</dbReference>
<dbReference type="PANTHER" id="PTHR21093">
    <property type="entry name" value="DIVERGENT PROTEIN KINASE DOMAIN 1C-RELATED"/>
    <property type="match status" value="1"/>
</dbReference>
<dbReference type="Pfam" id="PF12260">
    <property type="entry name" value="PIP49_C"/>
    <property type="match status" value="1"/>
</dbReference>
<dbReference type="Pfam" id="PF14875">
    <property type="entry name" value="PIP49_N"/>
    <property type="match status" value="1"/>
</dbReference>
<dbReference type="SMART" id="SM01299">
    <property type="entry name" value="PIP49_N"/>
    <property type="match status" value="1"/>
</dbReference>